<name>VMH3_VIPAA</name>
<evidence type="ECO:0000250" key="1">
    <source>
        <dbReference type="UniProtKB" id="P0DM89"/>
    </source>
</evidence>
<evidence type="ECO:0000250" key="2">
    <source>
        <dbReference type="UniProtKB" id="Q9DGB9"/>
    </source>
</evidence>
<evidence type="ECO:0000255" key="3"/>
<evidence type="ECO:0000255" key="4">
    <source>
        <dbReference type="PROSITE-ProRule" id="PRU00068"/>
    </source>
</evidence>
<evidence type="ECO:0000255" key="5">
    <source>
        <dbReference type="PROSITE-ProRule" id="PRU00276"/>
    </source>
</evidence>
<evidence type="ECO:0000255" key="6">
    <source>
        <dbReference type="PROSITE-ProRule" id="PRU00498"/>
    </source>
</evidence>
<evidence type="ECO:0000255" key="7">
    <source>
        <dbReference type="PROSITE-ProRule" id="PRU10095"/>
    </source>
</evidence>
<evidence type="ECO:0000269" key="8">
    <source>
    </source>
</evidence>
<evidence type="ECO:0000303" key="9">
    <source>
    </source>
</evidence>
<evidence type="ECO:0000305" key="10"/>
<evidence type="ECO:0000305" key="11">
    <source>
    </source>
</evidence>
<evidence type="ECO:0000312" key="12">
    <source>
        <dbReference type="EMBL" id="AGL45259.1"/>
    </source>
</evidence>
<sequence>MIQVLLVIICLAVFPYQGSSIILESGNVNDYEVVYLQKVTAMNKGAVKQPEQKYEDTMQYEFKVNGEPVILHLEKNKDLFSEDYSETHYSPDGREITTNPPVEDHCYYHGRIQNDADSTASISACNGLKGHFQLRGETYFIEPLKIPDSEAHAVYKYENVEKEDEAPKTCGVTQTNWESDELIKKASQLNLTPEQQRYLNSPKYIKLVIVADYIMFLKYGRSLITIRTRIYEIVNLLNVIYRVLNIYIALVGLEIWNNGDKINVLPEAKVTLDLFGKWRETDLLNRRKHDNAQLLTGINFNGPTAGLGYLGSMCNPQYSAGIVQDHNKVNFLVALAMAHEMGHNLGMDHDGIQCTCGAKSCIMSGTLSCEASIRFSNCSQEEHRKYLINKMPQCILNKPLKTDIVSPAVCGNYLVELGEDCDCGSPRDCQNPCCNAATCKLTPGSQCADGECCDQCKFGRAGTVCRPANGECDVSDVCTGQSAECPTDQFQRNGHPCQNNNGYCYNGTCPILGKQCISLFGASATVAQDACFQFNRLGNEYGYCRKENGRKIPCAPQDVKCGRLYCFDNLPEHKNPCQIYYTPRDENKGMVDPGTKCGDGMACSSNGQCVDVNTAY</sequence>
<organism evidence="12">
    <name type="scientific">Vipera ammodytes ammodytes</name>
    <name type="common">Western sand viper</name>
    <dbReference type="NCBI Taxonomy" id="8705"/>
    <lineage>
        <taxon>Eukaryota</taxon>
        <taxon>Metazoa</taxon>
        <taxon>Chordata</taxon>
        <taxon>Craniata</taxon>
        <taxon>Vertebrata</taxon>
        <taxon>Euteleostomi</taxon>
        <taxon>Lepidosauria</taxon>
        <taxon>Squamata</taxon>
        <taxon>Bifurcata</taxon>
        <taxon>Unidentata</taxon>
        <taxon>Episquamata</taxon>
        <taxon>Toxicofera</taxon>
        <taxon>Serpentes</taxon>
        <taxon>Colubroidea</taxon>
        <taxon>Viperidae</taxon>
        <taxon>Viperinae</taxon>
        <taxon>Vipera</taxon>
    </lineage>
</organism>
<accession>R4NNL0</accession>
<protein>
    <recommendedName>
        <fullName evidence="9">Zinc metalloproteinase-disintegrin-like protein H3</fullName>
        <ecNumber evidence="8">3.4.24.-</ecNumber>
    </recommendedName>
    <alternativeName>
        <fullName evidence="12">H3 metalloproteinase 1</fullName>
    </alternativeName>
    <alternativeName>
        <fullName evidence="9">Hemorrhagin 3</fullName>
    </alternativeName>
    <alternativeName>
        <fullName evidence="9">P-IIIc metalloproteinase H3</fullName>
    </alternativeName>
    <alternativeName>
        <fullName evidence="9">Snake venom metalloproteinase</fullName>
        <shortName evidence="9">SVMP</shortName>
    </alternativeName>
    <alternativeName>
        <fullName evidence="9">VaH3</fullName>
    </alternativeName>
</protein>
<reference evidence="12" key="1">
    <citation type="journal article" date="2013" name="Biochimie">
        <title>VaH3, one of the principal hemorrhagins in Vipera ammodytes ammodytes venom, is a homodimeric P-IIIc metalloproteinase.</title>
        <authorList>
            <person name="Sajevic T."/>
            <person name="Leonardi A."/>
            <person name="Kovacic L."/>
            <person name="Lang-Balija M."/>
            <person name="Kurtovic T."/>
            <person name="Pungercar J."/>
            <person name="Halassy B."/>
            <person name="Trampus-Bakija A."/>
            <person name="Krizaj I."/>
        </authorList>
    </citation>
    <scope>NUCLEOTIDE SEQUENCE [MRNA]</scope>
    <scope>PROTEIN SEQUENCE OF 207-218; 270-286; 278-286; 289-298; 329-338; 360-374; 386-400; 391-427; 441-444; 461-492; 515-524; 515-545; 552-556; 561-584; 564-583 AND 589-598</scope>
    <scope>FUNCTION</scope>
    <scope>CATALYTIC ACTIVITY</scope>
    <scope>ACTIVITY REGULATION</scope>
    <scope>SUBUNIT</scope>
    <scope>SUBCELLULAR LOCATION</scope>
    <scope>TISSUE SPECIFICITY</scope>
    <scope>GLYCOSYLATION</scope>
    <scope>PTM</scope>
    <scope>IDENTIFICATION BY MASS SPECTROMETRY</scope>
    <scope>MOTIF</scope>
    <scope>3D-STRUCTURE MODELING</scope>
    <source>
        <tissue evidence="9">Venom</tissue>
        <tissue evidence="9">Venom gland</tissue>
    </source>
</reference>
<proteinExistence type="evidence at protein level"/>
<dbReference type="EC" id="3.4.24.-" evidence="8"/>
<dbReference type="EMBL" id="KC007435">
    <property type="protein sequence ID" value="AGL45259.1"/>
    <property type="molecule type" value="mRNA"/>
</dbReference>
<dbReference type="SMR" id="R4NNL0"/>
<dbReference type="MEROPS" id="M12.315"/>
<dbReference type="BRENDA" id="3.4.24.B33">
    <property type="organism ID" value="10997"/>
</dbReference>
<dbReference type="GO" id="GO:0005576">
    <property type="term" value="C:extracellular region"/>
    <property type="evidence" value="ECO:0007669"/>
    <property type="project" value="UniProtKB-SubCell"/>
</dbReference>
<dbReference type="GO" id="GO:0005886">
    <property type="term" value="C:plasma membrane"/>
    <property type="evidence" value="ECO:0007669"/>
    <property type="project" value="TreeGrafter"/>
</dbReference>
<dbReference type="GO" id="GO:0046872">
    <property type="term" value="F:metal ion binding"/>
    <property type="evidence" value="ECO:0007669"/>
    <property type="project" value="UniProtKB-KW"/>
</dbReference>
<dbReference type="GO" id="GO:0004222">
    <property type="term" value="F:metalloendopeptidase activity"/>
    <property type="evidence" value="ECO:0007669"/>
    <property type="project" value="InterPro"/>
</dbReference>
<dbReference type="GO" id="GO:0090729">
    <property type="term" value="F:toxin activity"/>
    <property type="evidence" value="ECO:0007669"/>
    <property type="project" value="UniProtKB-KW"/>
</dbReference>
<dbReference type="GO" id="GO:0006508">
    <property type="term" value="P:proteolysis"/>
    <property type="evidence" value="ECO:0007669"/>
    <property type="project" value="UniProtKB-KW"/>
</dbReference>
<dbReference type="CDD" id="cd04269">
    <property type="entry name" value="ZnMc_adamalysin_II_like"/>
    <property type="match status" value="1"/>
</dbReference>
<dbReference type="FunFam" id="3.40.390.10:FF:000002">
    <property type="entry name" value="Disintegrin and metalloproteinase domain-containing protein 22"/>
    <property type="match status" value="1"/>
</dbReference>
<dbReference type="FunFam" id="4.10.70.10:FF:000001">
    <property type="entry name" value="Disintegrin and metalloproteinase domain-containing protein 22"/>
    <property type="match status" value="1"/>
</dbReference>
<dbReference type="Gene3D" id="3.40.390.10">
    <property type="entry name" value="Collagenase (Catalytic Domain)"/>
    <property type="match status" value="1"/>
</dbReference>
<dbReference type="Gene3D" id="4.10.70.10">
    <property type="entry name" value="Disintegrin domain"/>
    <property type="match status" value="1"/>
</dbReference>
<dbReference type="InterPro" id="IPR006586">
    <property type="entry name" value="ADAM_Cys-rich"/>
</dbReference>
<dbReference type="InterPro" id="IPR018358">
    <property type="entry name" value="Disintegrin_CS"/>
</dbReference>
<dbReference type="InterPro" id="IPR001762">
    <property type="entry name" value="Disintegrin_dom"/>
</dbReference>
<dbReference type="InterPro" id="IPR036436">
    <property type="entry name" value="Disintegrin_dom_sf"/>
</dbReference>
<dbReference type="InterPro" id="IPR024079">
    <property type="entry name" value="MetalloPept_cat_dom_sf"/>
</dbReference>
<dbReference type="InterPro" id="IPR001590">
    <property type="entry name" value="Peptidase_M12B"/>
</dbReference>
<dbReference type="InterPro" id="IPR002870">
    <property type="entry name" value="Peptidase_M12B_N"/>
</dbReference>
<dbReference type="InterPro" id="IPR034027">
    <property type="entry name" value="Reprolysin_adamalysin"/>
</dbReference>
<dbReference type="PANTHER" id="PTHR11905">
    <property type="entry name" value="ADAM A DISINTEGRIN AND METALLOPROTEASE DOMAIN"/>
    <property type="match status" value="1"/>
</dbReference>
<dbReference type="PANTHER" id="PTHR11905:SF32">
    <property type="entry name" value="DISINTEGRIN AND METALLOPROTEINASE DOMAIN-CONTAINING PROTEIN 28"/>
    <property type="match status" value="1"/>
</dbReference>
<dbReference type="Pfam" id="PF08516">
    <property type="entry name" value="ADAM_CR"/>
    <property type="match status" value="1"/>
</dbReference>
<dbReference type="Pfam" id="PF00200">
    <property type="entry name" value="Disintegrin"/>
    <property type="match status" value="1"/>
</dbReference>
<dbReference type="Pfam" id="PF01562">
    <property type="entry name" value="Pep_M12B_propep"/>
    <property type="match status" value="1"/>
</dbReference>
<dbReference type="Pfam" id="PF01421">
    <property type="entry name" value="Reprolysin"/>
    <property type="match status" value="1"/>
</dbReference>
<dbReference type="PRINTS" id="PR00289">
    <property type="entry name" value="DISINTEGRIN"/>
</dbReference>
<dbReference type="SMART" id="SM00608">
    <property type="entry name" value="ACR"/>
    <property type="match status" value="1"/>
</dbReference>
<dbReference type="SMART" id="SM00050">
    <property type="entry name" value="DISIN"/>
    <property type="match status" value="1"/>
</dbReference>
<dbReference type="SUPFAM" id="SSF57552">
    <property type="entry name" value="Blood coagulation inhibitor (disintegrin)"/>
    <property type="match status" value="1"/>
</dbReference>
<dbReference type="SUPFAM" id="SSF55486">
    <property type="entry name" value="Metalloproteases ('zincins'), catalytic domain"/>
    <property type="match status" value="1"/>
</dbReference>
<dbReference type="PROSITE" id="PS50215">
    <property type="entry name" value="ADAM_MEPRO"/>
    <property type="match status" value="1"/>
</dbReference>
<dbReference type="PROSITE" id="PS00427">
    <property type="entry name" value="DISINTEGRIN_1"/>
    <property type="match status" value="1"/>
</dbReference>
<dbReference type="PROSITE" id="PS50214">
    <property type="entry name" value="DISINTEGRIN_2"/>
    <property type="match status" value="1"/>
</dbReference>
<dbReference type="PROSITE" id="PS00142">
    <property type="entry name" value="ZINC_PROTEASE"/>
    <property type="match status" value="1"/>
</dbReference>
<feature type="signal peptide" evidence="3">
    <location>
        <begin position="1"/>
        <end position="20"/>
    </location>
</feature>
<feature type="propeptide" id="PRO_0000457377" evidence="3 11">
    <location>
        <begin position="21"/>
        <end position="193"/>
    </location>
</feature>
<feature type="chain" id="PRO_5004369240" description="Zinc metalloproteinase-disintegrin-like protein H3" evidence="11">
    <location>
        <begin position="194"/>
        <end position="616"/>
    </location>
</feature>
<feature type="domain" description="Peptidase M12B" evidence="5">
    <location>
        <begin position="203"/>
        <end position="399"/>
    </location>
</feature>
<feature type="domain" description="Disintegrin" evidence="4">
    <location>
        <begin position="407"/>
        <end position="493"/>
    </location>
</feature>
<feature type="short sequence motif" description="Metal-binding" evidence="10">
    <location>
        <begin position="339"/>
        <end position="350"/>
    </location>
</feature>
<feature type="short sequence motif" description="D/ECD-tripeptide" evidence="11">
    <location>
        <begin position="471"/>
        <end position="473"/>
    </location>
</feature>
<feature type="active site" description="Proton acceptor" evidence="5 7 10">
    <location>
        <position position="340"/>
    </location>
</feature>
<feature type="binding site" evidence="2 5 7">
    <location>
        <position position="339"/>
    </location>
    <ligand>
        <name>Zn(2+)</name>
        <dbReference type="ChEBI" id="CHEBI:29105"/>
        <note>catalytic</note>
    </ligand>
</feature>
<feature type="binding site" evidence="2 5 7">
    <location>
        <position position="343"/>
    </location>
    <ligand>
        <name>Zn(2+)</name>
        <dbReference type="ChEBI" id="CHEBI:29105"/>
        <note>catalytic</note>
    </ligand>
</feature>
<feature type="binding site" evidence="2 5">
    <location>
        <position position="349"/>
    </location>
    <ligand>
        <name>Zn(2+)</name>
        <dbReference type="ChEBI" id="CHEBI:29105"/>
        <note>catalytic</note>
    </ligand>
</feature>
<feature type="binding site" evidence="2">
    <location>
        <position position="409"/>
    </location>
    <ligand>
        <name>Ca(2+)</name>
        <dbReference type="ChEBI" id="CHEBI:29108"/>
        <label>1</label>
    </ligand>
</feature>
<feature type="binding site" evidence="2">
    <location>
        <position position="412"/>
    </location>
    <ligand>
        <name>Ca(2+)</name>
        <dbReference type="ChEBI" id="CHEBI:29108"/>
        <label>1</label>
    </ligand>
</feature>
<feature type="binding site" evidence="2">
    <location>
        <position position="416"/>
    </location>
    <ligand>
        <name>Ca(2+)</name>
        <dbReference type="ChEBI" id="CHEBI:29108"/>
        <label>1</label>
    </ligand>
</feature>
<feature type="binding site" evidence="2">
    <location>
        <position position="419"/>
    </location>
    <ligand>
        <name>Ca(2+)</name>
        <dbReference type="ChEBI" id="CHEBI:29108"/>
        <label>1</label>
    </ligand>
</feature>
<feature type="binding site" evidence="2">
    <location>
        <position position="422"/>
    </location>
    <ligand>
        <name>Ca(2+)</name>
        <dbReference type="ChEBI" id="CHEBI:29108"/>
        <label>1</label>
    </ligand>
</feature>
<feature type="binding site" evidence="2">
    <location>
        <position position="473"/>
    </location>
    <ligand>
        <name>Ca(2+)</name>
        <dbReference type="ChEBI" id="CHEBI:29108"/>
        <label>2</label>
    </ligand>
</feature>
<feature type="binding site" evidence="2">
    <location>
        <position position="476"/>
    </location>
    <ligand>
        <name>Ca(2+)</name>
        <dbReference type="ChEBI" id="CHEBI:29108"/>
        <label>2</label>
    </ligand>
</feature>
<feature type="binding site" evidence="2">
    <location>
        <position position="488"/>
    </location>
    <ligand>
        <name>Ca(2+)</name>
        <dbReference type="ChEBI" id="CHEBI:29108"/>
        <label>2</label>
    </ligand>
</feature>
<feature type="modified residue" description="Pyrrolidone carboxylic acid (Glu)" evidence="1">
    <location>
        <position position="194"/>
    </location>
</feature>
<feature type="glycosylation site" description="N-linked (GlcNAc...) asparagine" evidence="6">
    <location>
        <position position="377"/>
    </location>
</feature>
<feature type="glycosylation site" description="N-linked (GlcNAc...) asparagine" evidence="6">
    <location>
        <position position="506"/>
    </location>
</feature>
<feature type="disulfide bond" evidence="5">
    <location>
        <begin position="314"/>
        <end position="394"/>
    </location>
</feature>
<feature type="disulfide bond" evidence="5">
    <location>
        <begin position="354"/>
        <end position="378"/>
    </location>
</feature>
<feature type="disulfide bond" evidence="5">
    <location>
        <begin position="356"/>
        <end position="361"/>
    </location>
</feature>
<feature type="disulfide bond" description="Interchain" evidence="2 4 5">
    <location>
        <position position="369"/>
    </location>
</feature>
<feature type="disulfide bond" evidence="2">
    <location>
        <begin position="410"/>
        <end position="439"/>
    </location>
</feature>
<feature type="disulfide bond" evidence="2">
    <location>
        <begin position="421"/>
        <end position="434"/>
    </location>
</feature>
<feature type="disulfide bond" evidence="2">
    <location>
        <begin position="423"/>
        <end position="429"/>
    </location>
</feature>
<feature type="disulfide bond" evidence="2">
    <location>
        <begin position="433"/>
        <end position="456"/>
    </location>
</feature>
<feature type="disulfide bond" evidence="2">
    <location>
        <begin position="447"/>
        <end position="453"/>
    </location>
</feature>
<feature type="disulfide bond" evidence="2">
    <location>
        <begin position="452"/>
        <end position="478"/>
    </location>
</feature>
<feature type="disulfide bond" evidence="4">
    <location>
        <begin position="465"/>
        <end position="485"/>
    </location>
</feature>
<feature type="disulfide bond" evidence="2">
    <location>
        <begin position="472"/>
        <end position="504"/>
    </location>
</feature>
<feature type="disulfide bond" evidence="2">
    <location>
        <begin position="497"/>
        <end position="509"/>
    </location>
</feature>
<feature type="disulfide bond" evidence="2">
    <location>
        <begin position="516"/>
        <end position="566"/>
    </location>
</feature>
<feature type="disulfide bond" evidence="2">
    <location>
        <begin position="531"/>
        <end position="577"/>
    </location>
</feature>
<feature type="disulfide bond" evidence="2">
    <location>
        <begin position="544"/>
        <end position="554"/>
    </location>
</feature>
<feature type="disulfide bond" evidence="2">
    <location>
        <begin position="561"/>
        <end position="603"/>
    </location>
</feature>
<feature type="disulfide bond" evidence="2">
    <location>
        <begin position="597"/>
        <end position="609"/>
    </location>
</feature>
<keyword id="KW-0106">Calcium</keyword>
<keyword id="KW-1217">Cell adhesion impairing toxin</keyword>
<keyword id="KW-0903">Direct protein sequencing</keyword>
<keyword id="KW-1015">Disulfide bond</keyword>
<keyword id="KW-1206">Fibrinogenolytic toxin</keyword>
<keyword id="KW-0325">Glycoprotein</keyword>
<keyword id="KW-1200">Hemorrhagic toxin</keyword>
<keyword id="KW-1199">Hemostasis impairing toxin</keyword>
<keyword id="KW-0378">Hydrolase</keyword>
<keyword id="KW-0479">Metal-binding</keyword>
<keyword id="KW-0482">Metalloprotease</keyword>
<keyword id="KW-0645">Protease</keyword>
<keyword id="KW-0873">Pyrrolidone carboxylic acid</keyword>
<keyword id="KW-0964">Secreted</keyword>
<keyword id="KW-0732">Signal</keyword>
<keyword id="KW-0800">Toxin</keyword>
<keyword id="KW-0862">Zinc</keyword>
<keyword id="KW-0865">Zymogen</keyword>
<comment type="function">
    <text evidence="8">Zinc metalloprotease that has fibrinogenolytic and hemorrhagic activities. Cleaves insulin B chain readily at '38-Ala-|-Leu-39' bond, and at a significantly slower rate, at '40-Tyr-|-Leu-41' bond. Hydrolyzes isolated extracellular matrix (ECM) bovine fibronectin, and basal membrane (BM) proteins human collagen IV and, to a lesser extent, murine laminin, in vitro. Cleaves murine nidogen (at '350-Ser-|-Phe-351' and '380-Tyr-|-Asn-381' bonds), but not laminin, in a solubilized BM preparation. Hydrolyzes plasma proteins involved in blood coagulation in vitro. It significantly prolongs thrombin time. Has potent alpha-fibrinogenase activity cleaving human fibrinogen alpha chain at '432-Lys-|-Leu-433' bond, but does not cleave beta or gamma chains. Hydrolyzes bovine prothrombin, but does not cleave it at '366-Arg-|-Ile-367' bond, which is necessary for the formation of active alpha-thrombin, however, the cleavage of fragment 1 from it leads to reduced alpha-thrombin formation. Hydrolyzes bovine factor X heavy chain at '211-Ser-|-Leu-212', '213-Asp-|-Leu-214' and '216-Gly-|-Leu-217' bonds activating it only marginally as does not cleave at the physiological activation site. Does not cleave factor X light chain. No hydrolysis or activation of plasminogen. The alpha-fibrinogenase activity likely contributes to its hemorrhagic activity, which in rat can be completely neutralized in vivo by anti-ammodytagin antibodies, which strongly cross-react with this protein. Has very weak collagen-, ADP- and ristocetin-induced platelet aggregation inhibition activity in vitro.</text>
</comment>
<comment type="cofactor">
    <cofactor evidence="2">
        <name>Zn(2+)</name>
        <dbReference type="ChEBI" id="CHEBI:29105"/>
    </cofactor>
    <text evidence="2">Binds 1 zinc ion per subunit.</text>
</comment>
<comment type="activity regulation">
    <text evidence="8">The proteolytic activity requires Zn(2+) and Ca(2+) ions. The alpha-fibrinogenase activity is completely inhibited by EDTA, but not by PMSF.</text>
</comment>
<comment type="subunit">
    <text evidence="8">Homodimer; disulfide-linked.</text>
</comment>
<comment type="subcellular location">
    <subcellularLocation>
        <location evidence="8">Secreted</location>
    </subcellularLocation>
</comment>
<comment type="tissue specificity">
    <text evidence="8">Expressed by the venom gland (at protein level). Expressed by the venom gland.</text>
</comment>
<comment type="PTM">
    <text evidence="8">N-glycosylated.</text>
</comment>
<comment type="PTM">
    <text evidence="8">The N-terminus is blocked.</text>
</comment>
<comment type="similarity">
    <text evidence="9">Belongs to the venom metalloproteinase (M12B) family. P-III subfamily. P-IIIc sub-subfamily.</text>
</comment>